<feature type="chain" id="PRO_1000010645" description="Peptidyl-tRNA hydrolase">
    <location>
        <begin position="1"/>
        <end position="191"/>
    </location>
</feature>
<feature type="active site" description="Proton acceptor" evidence="1">
    <location>
        <position position="21"/>
    </location>
</feature>
<feature type="binding site" evidence="1">
    <location>
        <position position="16"/>
    </location>
    <ligand>
        <name>tRNA</name>
        <dbReference type="ChEBI" id="CHEBI:17843"/>
    </ligand>
</feature>
<feature type="binding site" evidence="1">
    <location>
        <position position="67"/>
    </location>
    <ligand>
        <name>tRNA</name>
        <dbReference type="ChEBI" id="CHEBI:17843"/>
    </ligand>
</feature>
<feature type="binding site" evidence="1">
    <location>
        <position position="69"/>
    </location>
    <ligand>
        <name>tRNA</name>
        <dbReference type="ChEBI" id="CHEBI:17843"/>
    </ligand>
</feature>
<feature type="binding site" evidence="1">
    <location>
        <position position="115"/>
    </location>
    <ligand>
        <name>tRNA</name>
        <dbReference type="ChEBI" id="CHEBI:17843"/>
    </ligand>
</feature>
<feature type="site" description="Discriminates between blocked and unblocked aminoacyl-tRNA" evidence="1">
    <location>
        <position position="11"/>
    </location>
</feature>
<feature type="site" description="Stabilizes the basic form of H active site to accept a proton" evidence="1">
    <location>
        <position position="94"/>
    </location>
</feature>
<sequence length="191" mass="21205">MTIKLIVGLGNPGKDYQSNRHNAGFWLCEALAHLYAGNFKKETKFFGEVAQINISGRKVRLLKPTVFMNCSGQSIQSIVNFYQINTNEILIVHDELDIDPGIAKIKFDGGHGGHNGLRDTIQTLGTKAFHRLRIGIGHPGDKSQVTNFVLHAPSKGELEKIQNSLNNSLQIIEDMINGNFDKAIKTLHTKE</sequence>
<keyword id="KW-0963">Cytoplasm</keyword>
<keyword id="KW-0378">Hydrolase</keyword>
<keyword id="KW-0694">RNA-binding</keyword>
<keyword id="KW-0820">tRNA-binding</keyword>
<name>PTH_RUTMC</name>
<organism>
    <name type="scientific">Ruthia magnifica subsp. Calyptogena magnifica</name>
    <dbReference type="NCBI Taxonomy" id="413404"/>
    <lineage>
        <taxon>Bacteria</taxon>
        <taxon>Pseudomonadati</taxon>
        <taxon>Pseudomonadota</taxon>
        <taxon>Gammaproteobacteria</taxon>
        <taxon>Candidatus Pseudothioglobaceae</taxon>
        <taxon>Candidatus Ruthturnera</taxon>
    </lineage>
</organism>
<accession>A1AXW5</accession>
<reference key="1">
    <citation type="journal article" date="2007" name="Science">
        <title>The Calyptogena magnifica chemoautotrophic symbiont genome.</title>
        <authorList>
            <person name="Newton I.L.G."/>
            <person name="Woyke T."/>
            <person name="Auchtung T.A."/>
            <person name="Dilly G.F."/>
            <person name="Dutton R.J."/>
            <person name="Fisher M.C."/>
            <person name="Fontanez K.M."/>
            <person name="Lau E."/>
            <person name="Stewart F.J."/>
            <person name="Richardson P.M."/>
            <person name="Barry K.W."/>
            <person name="Saunders E."/>
            <person name="Detter J.C."/>
            <person name="Wu D."/>
            <person name="Eisen J.A."/>
            <person name="Cavanaugh C.M."/>
        </authorList>
    </citation>
    <scope>NUCLEOTIDE SEQUENCE [LARGE SCALE GENOMIC DNA]</scope>
</reference>
<proteinExistence type="inferred from homology"/>
<gene>
    <name evidence="1" type="primary">pth</name>
    <name type="ordered locus">Rmag_1068</name>
</gene>
<comment type="function">
    <text evidence="1">Hydrolyzes ribosome-free peptidyl-tRNAs (with 1 or more amino acids incorporated), which drop off the ribosome during protein synthesis, or as a result of ribosome stalling.</text>
</comment>
<comment type="function">
    <text evidence="1">Catalyzes the release of premature peptidyl moieties from peptidyl-tRNA molecules trapped in stalled 50S ribosomal subunits, and thus maintains levels of free tRNAs and 50S ribosomes.</text>
</comment>
<comment type="catalytic activity">
    <reaction evidence="1">
        <text>an N-acyl-L-alpha-aminoacyl-tRNA + H2O = an N-acyl-L-amino acid + a tRNA + H(+)</text>
        <dbReference type="Rhea" id="RHEA:54448"/>
        <dbReference type="Rhea" id="RHEA-COMP:10123"/>
        <dbReference type="Rhea" id="RHEA-COMP:13883"/>
        <dbReference type="ChEBI" id="CHEBI:15377"/>
        <dbReference type="ChEBI" id="CHEBI:15378"/>
        <dbReference type="ChEBI" id="CHEBI:59874"/>
        <dbReference type="ChEBI" id="CHEBI:78442"/>
        <dbReference type="ChEBI" id="CHEBI:138191"/>
        <dbReference type="EC" id="3.1.1.29"/>
    </reaction>
</comment>
<comment type="subunit">
    <text evidence="1">Monomer.</text>
</comment>
<comment type="subcellular location">
    <subcellularLocation>
        <location evidence="1">Cytoplasm</location>
    </subcellularLocation>
</comment>
<comment type="similarity">
    <text evidence="1">Belongs to the PTH family.</text>
</comment>
<protein>
    <recommendedName>
        <fullName evidence="1">Peptidyl-tRNA hydrolase</fullName>
        <shortName evidence="1">Pth</shortName>
        <ecNumber evidence="1">3.1.1.29</ecNumber>
    </recommendedName>
</protein>
<dbReference type="EC" id="3.1.1.29" evidence="1"/>
<dbReference type="EMBL" id="CP000488">
    <property type="protein sequence ID" value="ABL02772.1"/>
    <property type="molecule type" value="Genomic_DNA"/>
</dbReference>
<dbReference type="RefSeq" id="WP_011738397.1">
    <property type="nucleotide sequence ID" value="NC_008610.1"/>
</dbReference>
<dbReference type="SMR" id="A1AXW5"/>
<dbReference type="STRING" id="413404.Rmag_1068"/>
<dbReference type="KEGG" id="rma:Rmag_1068"/>
<dbReference type="eggNOG" id="COG0193">
    <property type="taxonomic scope" value="Bacteria"/>
</dbReference>
<dbReference type="HOGENOM" id="CLU_062456_3_1_6"/>
<dbReference type="OrthoDB" id="9800507at2"/>
<dbReference type="Proteomes" id="UP000002587">
    <property type="component" value="Chromosome"/>
</dbReference>
<dbReference type="GO" id="GO:0005737">
    <property type="term" value="C:cytoplasm"/>
    <property type="evidence" value="ECO:0007669"/>
    <property type="project" value="UniProtKB-SubCell"/>
</dbReference>
<dbReference type="GO" id="GO:0004045">
    <property type="term" value="F:peptidyl-tRNA hydrolase activity"/>
    <property type="evidence" value="ECO:0007669"/>
    <property type="project" value="UniProtKB-UniRule"/>
</dbReference>
<dbReference type="GO" id="GO:0000049">
    <property type="term" value="F:tRNA binding"/>
    <property type="evidence" value="ECO:0007669"/>
    <property type="project" value="UniProtKB-UniRule"/>
</dbReference>
<dbReference type="GO" id="GO:0006515">
    <property type="term" value="P:protein quality control for misfolded or incompletely synthesized proteins"/>
    <property type="evidence" value="ECO:0007669"/>
    <property type="project" value="UniProtKB-UniRule"/>
</dbReference>
<dbReference type="GO" id="GO:0072344">
    <property type="term" value="P:rescue of stalled ribosome"/>
    <property type="evidence" value="ECO:0007669"/>
    <property type="project" value="UniProtKB-UniRule"/>
</dbReference>
<dbReference type="CDD" id="cd00462">
    <property type="entry name" value="PTH"/>
    <property type="match status" value="1"/>
</dbReference>
<dbReference type="FunFam" id="3.40.50.1470:FF:000001">
    <property type="entry name" value="Peptidyl-tRNA hydrolase"/>
    <property type="match status" value="1"/>
</dbReference>
<dbReference type="Gene3D" id="3.40.50.1470">
    <property type="entry name" value="Peptidyl-tRNA hydrolase"/>
    <property type="match status" value="1"/>
</dbReference>
<dbReference type="HAMAP" id="MF_00083">
    <property type="entry name" value="Pept_tRNA_hydro_bact"/>
    <property type="match status" value="1"/>
</dbReference>
<dbReference type="InterPro" id="IPR001328">
    <property type="entry name" value="Pept_tRNA_hydro"/>
</dbReference>
<dbReference type="InterPro" id="IPR018171">
    <property type="entry name" value="Pept_tRNA_hydro_CS"/>
</dbReference>
<dbReference type="InterPro" id="IPR036416">
    <property type="entry name" value="Pept_tRNA_hydro_sf"/>
</dbReference>
<dbReference type="NCBIfam" id="TIGR00447">
    <property type="entry name" value="pth"/>
    <property type="match status" value="1"/>
</dbReference>
<dbReference type="PANTHER" id="PTHR17224">
    <property type="entry name" value="PEPTIDYL-TRNA HYDROLASE"/>
    <property type="match status" value="1"/>
</dbReference>
<dbReference type="PANTHER" id="PTHR17224:SF1">
    <property type="entry name" value="PEPTIDYL-TRNA HYDROLASE"/>
    <property type="match status" value="1"/>
</dbReference>
<dbReference type="Pfam" id="PF01195">
    <property type="entry name" value="Pept_tRNA_hydro"/>
    <property type="match status" value="1"/>
</dbReference>
<dbReference type="SUPFAM" id="SSF53178">
    <property type="entry name" value="Peptidyl-tRNA hydrolase-like"/>
    <property type="match status" value="1"/>
</dbReference>
<dbReference type="PROSITE" id="PS01196">
    <property type="entry name" value="PEPT_TRNA_HYDROL_2"/>
    <property type="match status" value="1"/>
</dbReference>
<evidence type="ECO:0000255" key="1">
    <source>
        <dbReference type="HAMAP-Rule" id="MF_00083"/>
    </source>
</evidence>